<accession>Q9JWM8</accession>
<accession>A1IPD1</accession>
<comment type="function">
    <text evidence="1">Has an important function as a repair enzyme for proteins that have been inactivated by oxidation (By similarity). Catalyzes the reversible oxidation-reduction of methionine sulfoxide in proteins to methionine.</text>
</comment>
<comment type="catalytic activity">
    <reaction>
        <text>L-methionyl-[protein] + [thioredoxin]-disulfide + H2O = L-methionyl-(S)-S-oxide-[protein] + [thioredoxin]-dithiol</text>
        <dbReference type="Rhea" id="RHEA:14217"/>
        <dbReference type="Rhea" id="RHEA-COMP:10698"/>
        <dbReference type="Rhea" id="RHEA-COMP:10700"/>
        <dbReference type="Rhea" id="RHEA-COMP:12313"/>
        <dbReference type="Rhea" id="RHEA-COMP:12315"/>
        <dbReference type="ChEBI" id="CHEBI:15377"/>
        <dbReference type="ChEBI" id="CHEBI:16044"/>
        <dbReference type="ChEBI" id="CHEBI:29950"/>
        <dbReference type="ChEBI" id="CHEBI:44120"/>
        <dbReference type="ChEBI" id="CHEBI:50058"/>
        <dbReference type="EC" id="1.8.4.11"/>
    </reaction>
</comment>
<comment type="catalytic activity">
    <reaction>
        <text>[thioredoxin]-disulfide + L-methionine + H2O = L-methionine (S)-S-oxide + [thioredoxin]-dithiol</text>
        <dbReference type="Rhea" id="RHEA:19993"/>
        <dbReference type="Rhea" id="RHEA-COMP:10698"/>
        <dbReference type="Rhea" id="RHEA-COMP:10700"/>
        <dbReference type="ChEBI" id="CHEBI:15377"/>
        <dbReference type="ChEBI" id="CHEBI:29950"/>
        <dbReference type="ChEBI" id="CHEBI:50058"/>
        <dbReference type="ChEBI" id="CHEBI:57844"/>
        <dbReference type="ChEBI" id="CHEBI:58772"/>
        <dbReference type="EC" id="1.8.4.11"/>
    </reaction>
</comment>
<comment type="catalytic activity">
    <reaction>
        <text>L-methionyl-[protein] + [thioredoxin]-disulfide + H2O = L-methionyl-(R)-S-oxide-[protein] + [thioredoxin]-dithiol</text>
        <dbReference type="Rhea" id="RHEA:24164"/>
        <dbReference type="Rhea" id="RHEA-COMP:10698"/>
        <dbReference type="Rhea" id="RHEA-COMP:10700"/>
        <dbReference type="Rhea" id="RHEA-COMP:12313"/>
        <dbReference type="Rhea" id="RHEA-COMP:12314"/>
        <dbReference type="ChEBI" id="CHEBI:15377"/>
        <dbReference type="ChEBI" id="CHEBI:16044"/>
        <dbReference type="ChEBI" id="CHEBI:29950"/>
        <dbReference type="ChEBI" id="CHEBI:45764"/>
        <dbReference type="ChEBI" id="CHEBI:50058"/>
        <dbReference type="EC" id="1.8.4.12"/>
    </reaction>
</comment>
<comment type="domain">
    <text>Possesses 2 methionine sulfoxide reductase domains (A/MsrA and B/MsrB) and 1 N-terminal thioredoxin domain. The domain B exhibits a thioredoxin dependent methionine sulfoxide reductase activity; the Cys-495 is probably involved in the reduction of MetSO and in formation of the sulfenic acid derivative. The regeneration of Cys-495 is probably done via formation of a disulfide bond with Cys-440 followed by its reduction by thioredoxin.</text>
</comment>
<comment type="miscellaneous">
    <text>The domain MsrB is stereospecific for the R isomer of the sulfoxide of MetSO whereas the domain MsrA is stereospecific for the S isomer.</text>
</comment>
<comment type="similarity">
    <text evidence="3">In the N-terminal section; belongs to the thioredoxin family.</text>
</comment>
<comment type="similarity">
    <text evidence="3">In the central section; belongs to the MsrA Met sulfoxide reductase family.</text>
</comment>
<comment type="similarity">
    <text evidence="3">In the C-terminal section; belongs to the MsrB Met sulfoxide reductase family.</text>
</comment>
<evidence type="ECO:0000250" key="1"/>
<evidence type="ECO:0000255" key="2">
    <source>
        <dbReference type="PROSITE-ProRule" id="PRU01126"/>
    </source>
</evidence>
<evidence type="ECO:0000305" key="3"/>
<evidence type="ECO:0007829" key="4">
    <source>
        <dbReference type="PDB" id="2FY6"/>
    </source>
</evidence>
<evidence type="ECO:0007829" key="5">
    <source>
        <dbReference type="PDB" id="2JZR"/>
    </source>
</evidence>
<evidence type="ECO:0007829" key="6">
    <source>
        <dbReference type="PDB" id="2JZS"/>
    </source>
</evidence>
<evidence type="ECO:0007829" key="7">
    <source>
        <dbReference type="PDB" id="3BQE"/>
    </source>
</evidence>
<evidence type="ECO:0007829" key="8">
    <source>
        <dbReference type="PDB" id="3BQH"/>
    </source>
</evidence>
<evidence type="ECO:0007829" key="9">
    <source>
        <dbReference type="PDB" id="3HCG"/>
    </source>
</evidence>
<feature type="chain" id="PRO_0000138509" description="Peptide methionine sulfoxide reductase MsrA/MsrB">
    <location>
        <begin position="1"/>
        <end position="522"/>
    </location>
</feature>
<feature type="domain" description="Thioredoxin">
    <location>
        <begin position="17"/>
        <end position="174"/>
    </location>
</feature>
<feature type="domain" description="MsrB" evidence="2">
    <location>
        <begin position="383"/>
        <end position="506"/>
    </location>
</feature>
<feature type="region of interest" description="Peptide methionine sulfoxide reductase A">
    <location>
        <begin position="199"/>
        <end position="354"/>
    </location>
</feature>
<feature type="active site" evidence="1">
    <location>
        <position position="207"/>
    </location>
</feature>
<feature type="active site" description="Nucleophile" evidence="2">
    <location>
        <position position="495"/>
    </location>
</feature>
<feature type="disulfide bond" description="Redox-active" evidence="1">
    <location>
        <begin position="68"/>
        <end position="71"/>
    </location>
</feature>
<feature type="disulfide bond" evidence="3">
    <location>
        <begin position="440"/>
        <end position="495"/>
    </location>
</feature>
<feature type="helix" evidence="4">
    <location>
        <begin position="35"/>
        <end position="39"/>
    </location>
</feature>
<feature type="strand" evidence="5">
    <location>
        <begin position="46"/>
        <end position="48"/>
    </location>
</feature>
<feature type="helix" evidence="4">
    <location>
        <begin position="49"/>
        <end position="52"/>
    </location>
</feature>
<feature type="strand" evidence="4">
    <location>
        <begin position="59"/>
        <end position="64"/>
    </location>
</feature>
<feature type="helix" evidence="4">
    <location>
        <begin position="69"/>
        <end position="72"/>
    </location>
</feature>
<feature type="helix" evidence="4">
    <location>
        <begin position="75"/>
        <end position="83"/>
    </location>
</feature>
<feature type="helix" evidence="4">
    <location>
        <begin position="85"/>
        <end position="87"/>
    </location>
</feature>
<feature type="strand" evidence="4">
    <location>
        <begin position="90"/>
        <end position="96"/>
    </location>
</feature>
<feature type="strand" evidence="6">
    <location>
        <begin position="100"/>
        <end position="102"/>
    </location>
</feature>
<feature type="helix" evidence="4">
    <location>
        <begin position="108"/>
        <end position="113"/>
    </location>
</feature>
<feature type="strand" evidence="4">
    <location>
        <begin position="123"/>
        <end position="125"/>
    </location>
</feature>
<feature type="helix" evidence="4">
    <location>
        <begin position="130"/>
        <end position="134"/>
    </location>
</feature>
<feature type="strand" evidence="4">
    <location>
        <begin position="139"/>
        <end position="146"/>
    </location>
</feature>
<feature type="strand" evidence="4">
    <location>
        <begin position="152"/>
        <end position="158"/>
    </location>
</feature>
<feature type="helix" evidence="4">
    <location>
        <begin position="162"/>
        <end position="170"/>
    </location>
</feature>
<feature type="strand" evidence="8">
    <location>
        <begin position="198"/>
        <end position="206"/>
    </location>
</feature>
<feature type="helix" evidence="8">
    <location>
        <begin position="208"/>
        <end position="216"/>
    </location>
</feature>
<feature type="strand" evidence="8">
    <location>
        <begin position="221"/>
        <end position="230"/>
    </location>
</feature>
<feature type="strand" evidence="8">
    <location>
        <begin position="232"/>
        <end position="235"/>
    </location>
</feature>
<feature type="helix" evidence="8">
    <location>
        <begin position="238"/>
        <end position="243"/>
    </location>
</feature>
<feature type="strand" evidence="8">
    <location>
        <begin position="249"/>
        <end position="257"/>
    </location>
</feature>
<feature type="turn" evidence="8">
    <location>
        <begin position="258"/>
        <end position="260"/>
    </location>
</feature>
<feature type="helix" evidence="8">
    <location>
        <begin position="263"/>
        <end position="273"/>
    </location>
</feature>
<feature type="helix" evidence="8">
    <location>
        <begin position="278"/>
        <end position="280"/>
    </location>
</feature>
<feature type="strand" evidence="8">
    <location>
        <begin position="281"/>
        <end position="283"/>
    </location>
</feature>
<feature type="strand" evidence="7">
    <location>
        <begin position="285"/>
        <end position="287"/>
    </location>
</feature>
<feature type="helix" evidence="7">
    <location>
        <begin position="288"/>
        <end position="290"/>
    </location>
</feature>
<feature type="strand" evidence="8">
    <location>
        <begin position="292"/>
        <end position="298"/>
    </location>
</feature>
<feature type="helix" evidence="8">
    <location>
        <begin position="299"/>
        <end position="313"/>
    </location>
</feature>
<feature type="strand" evidence="8">
    <location>
        <begin position="323"/>
        <end position="326"/>
    </location>
</feature>
<feature type="strand" evidence="8">
    <location>
        <begin position="330"/>
        <end position="332"/>
    </location>
</feature>
<feature type="helix" evidence="8">
    <location>
        <begin position="335"/>
        <end position="337"/>
    </location>
</feature>
<feature type="helix" evidence="8">
    <location>
        <begin position="340"/>
        <end position="343"/>
    </location>
</feature>
<feature type="turn" evidence="8">
    <location>
        <begin position="355"/>
        <end position="357"/>
    </location>
</feature>
<feature type="helix" evidence="9">
    <location>
        <begin position="383"/>
        <end position="389"/>
    </location>
</feature>
<feature type="helix" evidence="9">
    <location>
        <begin position="392"/>
        <end position="400"/>
    </location>
</feature>
<feature type="helix" evidence="9">
    <location>
        <begin position="410"/>
        <end position="413"/>
    </location>
</feature>
<feature type="strand" evidence="9">
    <location>
        <begin position="417"/>
        <end position="422"/>
    </location>
</feature>
<feature type="turn" evidence="9">
    <location>
        <begin position="423"/>
        <end position="425"/>
    </location>
</feature>
<feature type="strand" evidence="9">
    <location>
        <begin position="428"/>
        <end position="431"/>
    </location>
</feature>
<feature type="helix" evidence="9">
    <location>
        <begin position="432"/>
        <end position="434"/>
    </location>
</feature>
<feature type="strand" evidence="9">
    <location>
        <begin position="439"/>
        <end position="442"/>
    </location>
</feature>
<feature type="strand" evidence="9">
    <location>
        <begin position="444"/>
        <end position="447"/>
    </location>
</feature>
<feature type="helix" evidence="9">
    <location>
        <begin position="451"/>
        <end position="453"/>
    </location>
</feature>
<feature type="strand" evidence="9">
    <location>
        <begin position="454"/>
        <end position="461"/>
    </location>
</feature>
<feature type="strand" evidence="9">
    <location>
        <begin position="464"/>
        <end position="471"/>
    </location>
</feature>
<feature type="turn" evidence="9">
    <location>
        <begin position="472"/>
        <end position="474"/>
    </location>
</feature>
<feature type="strand" evidence="9">
    <location>
        <begin position="477"/>
        <end position="483"/>
    </location>
</feature>
<feature type="helix" evidence="9">
    <location>
        <begin position="487"/>
        <end position="489"/>
    </location>
</feature>
<feature type="strand" evidence="9">
    <location>
        <begin position="493"/>
        <end position="496"/>
    </location>
</feature>
<feature type="helix" evidence="9">
    <location>
        <begin position="498"/>
        <end position="500"/>
    </location>
</feature>
<feature type="strand" evidence="9">
    <location>
        <begin position="501"/>
        <end position="505"/>
    </location>
</feature>
<feature type="helix" evidence="9">
    <location>
        <begin position="506"/>
        <end position="508"/>
    </location>
</feature>
<feature type="helix" evidence="9">
    <location>
        <begin position="509"/>
        <end position="512"/>
    </location>
</feature>
<feature type="helix" evidence="9">
    <location>
        <begin position="515"/>
        <end position="520"/>
    </location>
</feature>
<name>MSRAB_NEIMA</name>
<protein>
    <recommendedName>
        <fullName>Peptide methionine sulfoxide reductase MsrA/MsrB</fullName>
    </recommendedName>
    <domain>
        <recommendedName>
            <fullName>Thioredoxin</fullName>
        </recommendedName>
    </domain>
    <domain>
        <recommendedName>
            <fullName>Peptide methionine sulfoxide reductase MsrA</fullName>
            <shortName>Protein-methionine-S-oxide reductase</shortName>
            <ecNumber>1.8.4.11</ecNumber>
        </recommendedName>
        <alternativeName>
            <fullName>Peptide-methionine (S)-S-oxide reductase</fullName>
            <shortName>Peptide Met(O) reductase</shortName>
        </alternativeName>
    </domain>
    <domain>
        <recommendedName>
            <fullName>Peptide methionine sulfoxide reductase MsrB</fullName>
            <ecNumber>1.8.4.12</ecNumber>
        </recommendedName>
        <alternativeName>
            <fullName>Peptide-methionine (R)-S-oxide reductase</fullName>
        </alternativeName>
    </domain>
</protein>
<reference key="1">
    <citation type="journal article" date="2000" name="Nature">
        <title>Complete DNA sequence of a serogroup A strain of Neisseria meningitidis Z2491.</title>
        <authorList>
            <person name="Parkhill J."/>
            <person name="Achtman M."/>
            <person name="James K.D."/>
            <person name="Bentley S.D."/>
            <person name="Churcher C.M."/>
            <person name="Klee S.R."/>
            <person name="Morelli G."/>
            <person name="Basham D."/>
            <person name="Brown D."/>
            <person name="Chillingworth T."/>
            <person name="Davies R.M."/>
            <person name="Davis P."/>
            <person name="Devlin K."/>
            <person name="Feltwell T."/>
            <person name="Hamlin N."/>
            <person name="Holroyd S."/>
            <person name="Jagels K."/>
            <person name="Leather S."/>
            <person name="Moule S."/>
            <person name="Mungall K.L."/>
            <person name="Quail M.A."/>
            <person name="Rajandream M.A."/>
            <person name="Rutherford K.M."/>
            <person name="Simmonds M."/>
            <person name="Skelton J."/>
            <person name="Whitehead S."/>
            <person name="Spratt B.G."/>
            <person name="Barrell B.G."/>
        </authorList>
    </citation>
    <scope>NUCLEOTIDE SEQUENCE [LARGE SCALE GENOMIC DNA]</scope>
    <source>
        <strain>DSM 15465 / Z2491</strain>
    </source>
</reference>
<reference key="2">
    <citation type="journal article" date="2002" name="J. Biol. Chem.">
        <title>Characterization of the methionine sulfoxide reductase activities of PILB, a probable virulence factor from Neisseria meningitidis.</title>
        <authorList>
            <person name="Olry A."/>
            <person name="Boschi-Muller S."/>
            <person name="Marraud M."/>
            <person name="Sanglier-Cianferani S."/>
            <person name="van Dorsselaer A."/>
            <person name="Branlant G."/>
        </authorList>
    </citation>
    <scope>IDENTIFICATION OF THE METHIONINE SULFOXIDE REDUCTASE ACTIVITIES (MSRA AND MSRB)</scope>
    <source>
        <strain>DSM 15465 / Z2491</strain>
    </source>
</reference>
<proteinExistence type="evidence at protein level"/>
<dbReference type="EC" id="1.8.4.11"/>
<dbReference type="EC" id="1.8.4.12"/>
<dbReference type="EMBL" id="AL157959">
    <property type="protein sequence ID" value="CAM07595.1"/>
    <property type="molecule type" value="Genomic_DNA"/>
</dbReference>
<dbReference type="PIR" id="E82024">
    <property type="entry name" value="E82024"/>
</dbReference>
<dbReference type="RefSeq" id="WP_002216163.1">
    <property type="nucleotide sequence ID" value="NC_003116.1"/>
</dbReference>
<dbReference type="PDB" id="2FY6">
    <property type="method" value="X-ray"/>
    <property type="resolution" value="1.90 A"/>
    <property type="chains" value="A=34-176"/>
</dbReference>
<dbReference type="PDB" id="2JZR">
    <property type="method" value="NMR"/>
    <property type="chains" value="A=34-176"/>
</dbReference>
<dbReference type="PDB" id="2JZS">
    <property type="method" value="NMR"/>
    <property type="chains" value="A=34-176"/>
</dbReference>
<dbReference type="PDB" id="2K9F">
    <property type="method" value="NMR"/>
    <property type="chains" value="A=34-176"/>
</dbReference>
<dbReference type="PDB" id="3BQE">
    <property type="method" value="X-ray"/>
    <property type="resolution" value="2.00 A"/>
    <property type="chains" value="A=196-389"/>
</dbReference>
<dbReference type="PDB" id="3BQF">
    <property type="method" value="X-ray"/>
    <property type="resolution" value="2.24 A"/>
    <property type="chains" value="A=196-389"/>
</dbReference>
<dbReference type="PDB" id="3BQG">
    <property type="method" value="X-ray"/>
    <property type="resolution" value="2.00 A"/>
    <property type="chains" value="A=196-389"/>
</dbReference>
<dbReference type="PDB" id="3BQH">
    <property type="method" value="X-ray"/>
    <property type="resolution" value="1.95 A"/>
    <property type="chains" value="A=197-389"/>
</dbReference>
<dbReference type="PDB" id="3HCG">
    <property type="method" value="X-ray"/>
    <property type="resolution" value="1.82 A"/>
    <property type="chains" value="A/B/C/D=377-522"/>
</dbReference>
<dbReference type="PDB" id="3HCH">
    <property type="method" value="X-ray"/>
    <property type="resolution" value="2.10 A"/>
    <property type="chains" value="A/B=377-522"/>
</dbReference>
<dbReference type="PDBsum" id="2FY6"/>
<dbReference type="PDBsum" id="2JZR"/>
<dbReference type="PDBsum" id="2JZS"/>
<dbReference type="PDBsum" id="2K9F"/>
<dbReference type="PDBsum" id="3BQE"/>
<dbReference type="PDBsum" id="3BQF"/>
<dbReference type="PDBsum" id="3BQG"/>
<dbReference type="PDBsum" id="3BQH"/>
<dbReference type="PDBsum" id="3HCG"/>
<dbReference type="PDBsum" id="3HCH"/>
<dbReference type="BMRB" id="Q9JWM8"/>
<dbReference type="SMR" id="Q9JWM8"/>
<dbReference type="EnsemblBacteria" id="CAM07595">
    <property type="protein sequence ID" value="CAM07595"/>
    <property type="gene ID" value="NMA0290"/>
</dbReference>
<dbReference type="KEGG" id="nma:NMA0290"/>
<dbReference type="HOGENOM" id="CLU_031040_11_0_4"/>
<dbReference type="BRENDA" id="1.8.4.11">
    <property type="organism ID" value="3593"/>
</dbReference>
<dbReference type="BRENDA" id="1.8.4.12">
    <property type="organism ID" value="3593"/>
</dbReference>
<dbReference type="SABIO-RK" id="Q9JWM8"/>
<dbReference type="EvolutionaryTrace" id="Q9JWM8"/>
<dbReference type="Proteomes" id="UP000000626">
    <property type="component" value="Chromosome"/>
</dbReference>
<dbReference type="GO" id="GO:0005737">
    <property type="term" value="C:cytoplasm"/>
    <property type="evidence" value="ECO:0007669"/>
    <property type="project" value="TreeGrafter"/>
</dbReference>
<dbReference type="GO" id="GO:0036456">
    <property type="term" value="F:L-methionine-(S)-S-oxide reductase activity"/>
    <property type="evidence" value="ECO:0007669"/>
    <property type="project" value="TreeGrafter"/>
</dbReference>
<dbReference type="GO" id="GO:0033743">
    <property type="term" value="F:peptide-methionine (R)-S-oxide reductase activity"/>
    <property type="evidence" value="ECO:0007669"/>
    <property type="project" value="UniProtKB-UniRule"/>
</dbReference>
<dbReference type="GO" id="GO:0008113">
    <property type="term" value="F:peptide-methionine (S)-S-oxide reductase activity"/>
    <property type="evidence" value="ECO:0007669"/>
    <property type="project" value="UniProtKB-UniRule"/>
</dbReference>
<dbReference type="GO" id="GO:0034599">
    <property type="term" value="P:cellular response to oxidative stress"/>
    <property type="evidence" value="ECO:0007669"/>
    <property type="project" value="TreeGrafter"/>
</dbReference>
<dbReference type="GO" id="GO:0036211">
    <property type="term" value="P:protein modification process"/>
    <property type="evidence" value="ECO:0007669"/>
    <property type="project" value="UniProtKB-UniRule"/>
</dbReference>
<dbReference type="CDD" id="cd02966">
    <property type="entry name" value="TlpA_like_family"/>
    <property type="match status" value="1"/>
</dbReference>
<dbReference type="FunFam" id="3.40.30.10:FF:000321">
    <property type="entry name" value="Multifunctional fusion protein"/>
    <property type="match status" value="1"/>
</dbReference>
<dbReference type="FunFam" id="3.30.1060.10:FF:000007">
    <property type="entry name" value="Peptide methionine sulfoxide reductase msrA/msrB"/>
    <property type="match status" value="1"/>
</dbReference>
<dbReference type="FunFam" id="2.170.150.20:FF:000003">
    <property type="entry name" value="Peptide methionine sulfoxide reductase MsrB"/>
    <property type="match status" value="1"/>
</dbReference>
<dbReference type="Gene3D" id="3.40.30.10">
    <property type="entry name" value="Glutaredoxin"/>
    <property type="match status" value="1"/>
</dbReference>
<dbReference type="Gene3D" id="2.170.150.20">
    <property type="entry name" value="Peptide methionine sulfoxide reductase"/>
    <property type="match status" value="1"/>
</dbReference>
<dbReference type="Gene3D" id="3.30.1060.10">
    <property type="entry name" value="Peptide methionine sulphoxide reductase MsrA"/>
    <property type="match status" value="1"/>
</dbReference>
<dbReference type="HAMAP" id="MF_01401">
    <property type="entry name" value="MsrA"/>
    <property type="match status" value="1"/>
</dbReference>
<dbReference type="HAMAP" id="MF_01400">
    <property type="entry name" value="MsrB"/>
    <property type="match status" value="1"/>
</dbReference>
<dbReference type="InterPro" id="IPR002569">
    <property type="entry name" value="Met_Sox_Rdtase_MsrA_dom"/>
</dbReference>
<dbReference type="InterPro" id="IPR036509">
    <property type="entry name" value="Met_Sox_Rdtase_MsrA_sf"/>
</dbReference>
<dbReference type="InterPro" id="IPR002579">
    <property type="entry name" value="Met_Sox_Rdtase_MsrB_dom"/>
</dbReference>
<dbReference type="InterPro" id="IPR050162">
    <property type="entry name" value="MsrA_MetSO_reductase"/>
</dbReference>
<dbReference type="InterPro" id="IPR011057">
    <property type="entry name" value="Mss4-like_sf"/>
</dbReference>
<dbReference type="InterPro" id="IPR013740">
    <property type="entry name" value="Redoxin"/>
</dbReference>
<dbReference type="InterPro" id="IPR036249">
    <property type="entry name" value="Thioredoxin-like_sf"/>
</dbReference>
<dbReference type="InterPro" id="IPR013766">
    <property type="entry name" value="Thioredoxin_domain"/>
</dbReference>
<dbReference type="NCBIfam" id="TIGR00401">
    <property type="entry name" value="msrA"/>
    <property type="match status" value="1"/>
</dbReference>
<dbReference type="NCBIfam" id="TIGR00357">
    <property type="entry name" value="peptide-methionine (R)-S-oxide reductase MsrB"/>
    <property type="match status" value="1"/>
</dbReference>
<dbReference type="NCBIfam" id="NF010625">
    <property type="entry name" value="PRK14018.1"/>
    <property type="match status" value="1"/>
</dbReference>
<dbReference type="PANTHER" id="PTHR42799">
    <property type="entry name" value="MITOCHONDRIAL PEPTIDE METHIONINE SULFOXIDE REDUCTASE"/>
    <property type="match status" value="1"/>
</dbReference>
<dbReference type="PANTHER" id="PTHR42799:SF2">
    <property type="entry name" value="MITOCHONDRIAL PEPTIDE METHIONINE SULFOXIDE REDUCTASE"/>
    <property type="match status" value="1"/>
</dbReference>
<dbReference type="Pfam" id="PF01625">
    <property type="entry name" value="PMSR"/>
    <property type="match status" value="1"/>
</dbReference>
<dbReference type="Pfam" id="PF08534">
    <property type="entry name" value="Redoxin"/>
    <property type="match status" value="1"/>
</dbReference>
<dbReference type="Pfam" id="PF01641">
    <property type="entry name" value="SelR"/>
    <property type="match status" value="1"/>
</dbReference>
<dbReference type="SUPFAM" id="SSF51316">
    <property type="entry name" value="Mss4-like"/>
    <property type="match status" value="1"/>
</dbReference>
<dbReference type="SUPFAM" id="SSF55068">
    <property type="entry name" value="Peptide methionine sulfoxide reductase"/>
    <property type="match status" value="1"/>
</dbReference>
<dbReference type="SUPFAM" id="SSF52833">
    <property type="entry name" value="Thioredoxin-like"/>
    <property type="match status" value="1"/>
</dbReference>
<dbReference type="PROSITE" id="PS51790">
    <property type="entry name" value="MSRB"/>
    <property type="match status" value="1"/>
</dbReference>
<dbReference type="PROSITE" id="PS51352">
    <property type="entry name" value="THIOREDOXIN_2"/>
    <property type="match status" value="1"/>
</dbReference>
<sequence>MKHRTFFSLCAKFGCLLALGACSPKIVDAGAATVPHTLSTLKTADNRPASVYLKKDKPTLIKFWASWCPLCLSELGQTEKWAQDAKFSSANLITVASPGFLHEKKDGDFQKWYAGLNYPKLPVVTDNGGTIAQSLNISVYPSWALIGKDGDVQRIVKGSINEAQALALIRDPNADLGSLKHSFYKPDTQKKDSKIMNTRTIYLAGGCFWGLEAYFQRIDGVVDAVSGYANGNTKNPSYEDVSYRHTGHAETVKVTYDADKLSLDDILQYFFRVVDPTSLNKQGNDTGTQYRSGVYYTDPAEKAVIAAALKREQQKYQLPLVVENEPLKNFYDAEEYHQDYLIKNPNGYCHIDIRKADEPLPGKTKTAPQGKGFDAATYKKPSDAELKRTLTEEQYQVTQNSATEYAFSHEYDHLFKPGIYVDVVSGEPLFSSADKYDSGCGWPSFTRPIDAKSVTEHDDFSYNMRRTEVRSHAADSHLGHVFPDGPRDKGGLRYCINGASLKFIPLEQMDAAGYGALKSKVK</sequence>
<gene>
    <name type="primary">msrAB</name>
    <name type="synonym">pilB</name>
    <name type="ordered locus">NMA0290</name>
</gene>
<keyword id="KW-0002">3D-structure</keyword>
<keyword id="KW-1015">Disulfide bond</keyword>
<keyword id="KW-0249">Electron transport</keyword>
<keyword id="KW-0511">Multifunctional enzyme</keyword>
<keyword id="KW-0560">Oxidoreductase</keyword>
<keyword id="KW-0676">Redox-active center</keyword>
<keyword id="KW-0813">Transport</keyword>
<organism>
    <name type="scientific">Neisseria meningitidis serogroup A / serotype 4A (strain DSM 15465 / Z2491)</name>
    <dbReference type="NCBI Taxonomy" id="122587"/>
    <lineage>
        <taxon>Bacteria</taxon>
        <taxon>Pseudomonadati</taxon>
        <taxon>Pseudomonadota</taxon>
        <taxon>Betaproteobacteria</taxon>
        <taxon>Neisseriales</taxon>
        <taxon>Neisseriaceae</taxon>
        <taxon>Neisseria</taxon>
    </lineage>
</organism>